<organism>
    <name type="scientific">Crotalus adamanteus</name>
    <name type="common">Eastern diamondback rattlesnake</name>
    <dbReference type="NCBI Taxonomy" id="8729"/>
    <lineage>
        <taxon>Eukaryota</taxon>
        <taxon>Metazoa</taxon>
        <taxon>Chordata</taxon>
        <taxon>Craniata</taxon>
        <taxon>Vertebrata</taxon>
        <taxon>Euteleostomi</taxon>
        <taxon>Lepidosauria</taxon>
        <taxon>Squamata</taxon>
        <taxon>Bifurcata</taxon>
        <taxon>Unidentata</taxon>
        <taxon>Episquamata</taxon>
        <taxon>Toxicofera</taxon>
        <taxon>Serpentes</taxon>
        <taxon>Colubroidea</taxon>
        <taxon>Viperidae</taxon>
        <taxon>Crotalinae</taxon>
        <taxon>Crotalus</taxon>
    </lineage>
</organism>
<comment type="function">
    <text evidence="1">Snake venom metalloproteinase that impairs hemostasis in the envenomed animal.</text>
</comment>
<comment type="cofactor">
    <cofactor evidence="1">
        <name>Zn(2+)</name>
        <dbReference type="ChEBI" id="CHEBI:29105"/>
    </cofactor>
    <text evidence="1">Binds 1 zinc ion per subunit.</text>
</comment>
<comment type="subcellular location">
    <subcellularLocation>
        <location>Secreted</location>
    </subcellularLocation>
</comment>
<comment type="tissue specificity">
    <text>Expressed by the venom gland.</text>
</comment>
<comment type="miscellaneous">
    <text>The disintegrin domain belongs to the long disintegrin subfamily.</text>
</comment>
<comment type="similarity">
    <text evidence="5">Belongs to the venom metalloproteinase (M12B) family. P-III subfamily.</text>
</comment>
<keyword id="KW-0106">Calcium</keyword>
<keyword id="KW-1217">Cell adhesion impairing toxin</keyword>
<keyword id="KW-1015">Disulfide bond</keyword>
<keyword id="KW-0325">Glycoprotein</keyword>
<keyword id="KW-1199">Hemostasis impairing toxin</keyword>
<keyword id="KW-0378">Hydrolase</keyword>
<keyword id="KW-0479">Metal-binding</keyword>
<keyword id="KW-0482">Metalloprotease</keyword>
<keyword id="KW-0645">Protease</keyword>
<keyword id="KW-0964">Secreted</keyword>
<keyword id="KW-0732">Signal</keyword>
<keyword id="KW-0800">Toxin</keyword>
<keyword id="KW-0862">Zinc</keyword>
<keyword id="KW-0865">Zymogen</keyword>
<dbReference type="EC" id="3.4.24.-"/>
<dbReference type="EMBL" id="JU173712">
    <property type="protein sequence ID" value="AFJ49238.1"/>
    <property type="molecule type" value="mRNA"/>
</dbReference>
<dbReference type="SMR" id="J3S830"/>
<dbReference type="MEROPS" id="M12.022"/>
<dbReference type="GO" id="GO:0005576">
    <property type="term" value="C:extracellular region"/>
    <property type="evidence" value="ECO:0007669"/>
    <property type="project" value="UniProtKB-SubCell"/>
</dbReference>
<dbReference type="GO" id="GO:0005886">
    <property type="term" value="C:plasma membrane"/>
    <property type="evidence" value="ECO:0007669"/>
    <property type="project" value="TreeGrafter"/>
</dbReference>
<dbReference type="GO" id="GO:0046872">
    <property type="term" value="F:metal ion binding"/>
    <property type="evidence" value="ECO:0007669"/>
    <property type="project" value="UniProtKB-KW"/>
</dbReference>
<dbReference type="GO" id="GO:0004222">
    <property type="term" value="F:metalloendopeptidase activity"/>
    <property type="evidence" value="ECO:0007669"/>
    <property type="project" value="InterPro"/>
</dbReference>
<dbReference type="GO" id="GO:0090729">
    <property type="term" value="F:toxin activity"/>
    <property type="evidence" value="ECO:0007669"/>
    <property type="project" value="UniProtKB-KW"/>
</dbReference>
<dbReference type="GO" id="GO:0006508">
    <property type="term" value="P:proteolysis"/>
    <property type="evidence" value="ECO:0007669"/>
    <property type="project" value="UniProtKB-KW"/>
</dbReference>
<dbReference type="CDD" id="cd04269">
    <property type="entry name" value="ZnMc_adamalysin_II_like"/>
    <property type="match status" value="1"/>
</dbReference>
<dbReference type="FunFam" id="3.40.390.10:FF:000002">
    <property type="entry name" value="Disintegrin and metalloproteinase domain-containing protein 22"/>
    <property type="match status" value="1"/>
</dbReference>
<dbReference type="FunFam" id="4.10.70.10:FF:000001">
    <property type="entry name" value="Disintegrin and metalloproteinase domain-containing protein 22"/>
    <property type="match status" value="1"/>
</dbReference>
<dbReference type="Gene3D" id="3.40.390.10">
    <property type="entry name" value="Collagenase (Catalytic Domain)"/>
    <property type="match status" value="1"/>
</dbReference>
<dbReference type="Gene3D" id="4.10.70.10">
    <property type="entry name" value="Disintegrin domain"/>
    <property type="match status" value="1"/>
</dbReference>
<dbReference type="InterPro" id="IPR006586">
    <property type="entry name" value="ADAM_Cys-rich"/>
</dbReference>
<dbReference type="InterPro" id="IPR018358">
    <property type="entry name" value="Disintegrin_CS"/>
</dbReference>
<dbReference type="InterPro" id="IPR001762">
    <property type="entry name" value="Disintegrin_dom"/>
</dbReference>
<dbReference type="InterPro" id="IPR036436">
    <property type="entry name" value="Disintegrin_dom_sf"/>
</dbReference>
<dbReference type="InterPro" id="IPR024079">
    <property type="entry name" value="MetalloPept_cat_dom_sf"/>
</dbReference>
<dbReference type="InterPro" id="IPR001590">
    <property type="entry name" value="Peptidase_M12B"/>
</dbReference>
<dbReference type="InterPro" id="IPR002870">
    <property type="entry name" value="Peptidase_M12B_N"/>
</dbReference>
<dbReference type="InterPro" id="IPR034027">
    <property type="entry name" value="Reprolysin_adamalysin"/>
</dbReference>
<dbReference type="PANTHER" id="PTHR11905">
    <property type="entry name" value="ADAM A DISINTEGRIN AND METALLOPROTEASE DOMAIN"/>
    <property type="match status" value="1"/>
</dbReference>
<dbReference type="PANTHER" id="PTHR11905:SF32">
    <property type="entry name" value="DISINTEGRIN AND METALLOPROTEINASE DOMAIN-CONTAINING PROTEIN 28"/>
    <property type="match status" value="1"/>
</dbReference>
<dbReference type="Pfam" id="PF08516">
    <property type="entry name" value="ADAM_CR"/>
    <property type="match status" value="1"/>
</dbReference>
<dbReference type="Pfam" id="PF00200">
    <property type="entry name" value="Disintegrin"/>
    <property type="match status" value="1"/>
</dbReference>
<dbReference type="Pfam" id="PF01562">
    <property type="entry name" value="Pep_M12B_propep"/>
    <property type="match status" value="1"/>
</dbReference>
<dbReference type="Pfam" id="PF01421">
    <property type="entry name" value="Reprolysin"/>
    <property type="match status" value="1"/>
</dbReference>
<dbReference type="PRINTS" id="PR00289">
    <property type="entry name" value="DISINTEGRIN"/>
</dbReference>
<dbReference type="SMART" id="SM00608">
    <property type="entry name" value="ACR"/>
    <property type="match status" value="1"/>
</dbReference>
<dbReference type="SMART" id="SM00050">
    <property type="entry name" value="DISIN"/>
    <property type="match status" value="1"/>
</dbReference>
<dbReference type="SUPFAM" id="SSF57552">
    <property type="entry name" value="Blood coagulation inhibitor (disintegrin)"/>
    <property type="match status" value="1"/>
</dbReference>
<dbReference type="SUPFAM" id="SSF55486">
    <property type="entry name" value="Metalloproteases ('zincins'), catalytic domain"/>
    <property type="match status" value="1"/>
</dbReference>
<dbReference type="PROSITE" id="PS50215">
    <property type="entry name" value="ADAM_MEPRO"/>
    <property type="match status" value="1"/>
</dbReference>
<dbReference type="PROSITE" id="PS00427">
    <property type="entry name" value="DISINTEGRIN_1"/>
    <property type="match status" value="1"/>
</dbReference>
<dbReference type="PROSITE" id="PS50214">
    <property type="entry name" value="DISINTEGRIN_2"/>
    <property type="match status" value="1"/>
</dbReference>
<dbReference type="PROSITE" id="PS00142">
    <property type="entry name" value="ZINC_PROTEASE"/>
    <property type="match status" value="1"/>
</dbReference>
<proteinExistence type="evidence at protein level"/>
<sequence length="610" mass="68840">MIQVLLVTILAVFPYQGSSIILGSGNVNDYEVVYPRKVTALPKGAVQPKYEDAMQYELKVNGEPMVLHLEKNKQLFSKDYSETHYSPDGREITTYPLVEDHCYYHGRIENDADSTASISACNGLKGHFKLQGEIYLIEPLKLRDSEAHAVFKYENVEKEDEAPKMCGVTQNWESYEPIKKASQLVVTAEQQRYLNPYRYVELVIVADHGMFTKYNRNLTEVKTWVYEIVNTLNEIYRYLYIRVALVGLEIWSDGDLSNVTLSSGNTLDSFGEWRKRDLLRRKRHDNAQLLTAIDFSGNTIGRASIANMCDPKYSTGIVQDHSPINLLVAVTMAHEMGHNLGLHHDGKSCTCGDYICIMNATLSHQHSKYFSNCSYNQYWDYINTYTPKCILNEPLRTDIISPPVCGNELLEAGEECDCGSPRNCQYQCCDAATCKLHSWVECESGVCCEQCKFRTAGTECRARRSECDIAESCTGQSADCPTDDFHKNGQPCLNNFGYCYNGNCPIMYHQCYALFGSNVYEAEDSCFESNQKGDDYGYCRKENGEKIPCAPEDVKCGRLYCNDNSPGQNDPCKIFPSNEDEHKEMVLPGTKCADGKFCTNGHCVDVATAY</sequence>
<protein>
    <recommendedName>
        <fullName>Zinc metalloproteinase-disintegrin-like 3a</fullName>
        <ecNumber>3.4.24.-</ecNumber>
    </recommendedName>
    <alternativeName>
        <fullName>Snake venom metalloproteinase</fullName>
        <shortName>SVMP</shortName>
    </alternativeName>
</protein>
<reference key="1">
    <citation type="journal article" date="2012" name="BMC Genomics">
        <title>The venom-gland transcriptome of the eastern diamondback rattlesnake (Crotalus adamanteus).</title>
        <authorList>
            <person name="Rokyta D.R."/>
            <person name="Lemmon A.R."/>
            <person name="Margres M.J."/>
            <person name="Aronow K."/>
        </authorList>
    </citation>
    <scope>NUCLEOTIDE SEQUENCE [MRNA]</scope>
    <source>
        <tissue>Venom gland</tissue>
    </source>
</reference>
<reference key="2">
    <citation type="journal article" date="2014" name="J. Proteomics">
        <title>Linking the transcriptome and proteome to characterize the venom of the eastern diamondback rattlesnake (Crotalus adamanteus).</title>
        <authorList>
            <person name="Margres M.J."/>
            <person name="McGivern J.J."/>
            <person name="Wray K.P."/>
            <person name="Seavy M."/>
            <person name="Calvin K."/>
            <person name="Rokyta D.R."/>
        </authorList>
    </citation>
    <scope>IDENTIFICATION BY MASS SPECTROMETRY</scope>
    <source>
        <tissue>Venom</tissue>
    </source>
</reference>
<name>VM33_CROAD</name>
<feature type="signal peptide" evidence="2">
    <location>
        <begin position="1"/>
        <end position="19"/>
    </location>
</feature>
<feature type="propeptide" id="PRO_0000425627" evidence="1">
    <location>
        <begin position="20"/>
        <end position="188"/>
    </location>
</feature>
<feature type="chain" id="PRO_0000425628" description="Zinc metalloproteinase-disintegrin-like 3a">
    <location>
        <begin position="189"/>
        <end position="610"/>
    </location>
</feature>
<feature type="domain" description="Peptidase M12B" evidence="4">
    <location>
        <begin position="198"/>
        <end position="394"/>
    </location>
</feature>
<feature type="domain" description="Disintegrin" evidence="3">
    <location>
        <begin position="402"/>
        <end position="488"/>
    </location>
</feature>
<feature type="short sequence motif" description="D/ECD-tripeptide">
    <location>
        <begin position="466"/>
        <end position="468"/>
    </location>
</feature>
<feature type="active site" evidence="4">
    <location>
        <position position="335"/>
    </location>
</feature>
<feature type="binding site" evidence="1">
    <location>
        <position position="201"/>
    </location>
    <ligand>
        <name>Ca(2+)</name>
        <dbReference type="ChEBI" id="CHEBI:29108"/>
        <label>1</label>
    </ligand>
</feature>
<feature type="binding site" evidence="1">
    <location>
        <position position="285"/>
    </location>
    <ligand>
        <name>Ca(2+)</name>
        <dbReference type="ChEBI" id="CHEBI:29108"/>
        <label>1</label>
    </ligand>
</feature>
<feature type="binding site" evidence="4">
    <location>
        <position position="334"/>
    </location>
    <ligand>
        <name>Zn(2+)</name>
        <dbReference type="ChEBI" id="CHEBI:29105"/>
        <note>catalytic</note>
    </ligand>
</feature>
<feature type="binding site" evidence="4">
    <location>
        <position position="338"/>
    </location>
    <ligand>
        <name>Zn(2+)</name>
        <dbReference type="ChEBI" id="CHEBI:29105"/>
        <note>catalytic</note>
    </ligand>
</feature>
<feature type="binding site" evidence="4">
    <location>
        <position position="344"/>
    </location>
    <ligand>
        <name>Zn(2+)</name>
        <dbReference type="ChEBI" id="CHEBI:29105"/>
        <note>catalytic</note>
    </ligand>
</feature>
<feature type="binding site" evidence="1">
    <location>
        <position position="389"/>
    </location>
    <ligand>
        <name>Ca(2+)</name>
        <dbReference type="ChEBI" id="CHEBI:29108"/>
        <label>1</label>
    </ligand>
</feature>
<feature type="binding site" evidence="1">
    <location>
        <position position="392"/>
    </location>
    <ligand>
        <name>Ca(2+)</name>
        <dbReference type="ChEBI" id="CHEBI:29108"/>
        <label>1</label>
    </ligand>
</feature>
<feature type="binding site" evidence="1">
    <location>
        <position position="404"/>
    </location>
    <ligand>
        <name>Ca(2+)</name>
        <dbReference type="ChEBI" id="CHEBI:29108"/>
        <label>2</label>
    </ligand>
</feature>
<feature type="binding site" evidence="1">
    <location>
        <position position="407"/>
    </location>
    <ligand>
        <name>Ca(2+)</name>
        <dbReference type="ChEBI" id="CHEBI:29108"/>
        <label>2</label>
    </ligand>
</feature>
<feature type="binding site" evidence="1">
    <location>
        <position position="411"/>
    </location>
    <ligand>
        <name>Ca(2+)</name>
        <dbReference type="ChEBI" id="CHEBI:29108"/>
        <label>2</label>
    </ligand>
</feature>
<feature type="binding site" evidence="1">
    <location>
        <position position="414"/>
    </location>
    <ligand>
        <name>Ca(2+)</name>
        <dbReference type="ChEBI" id="CHEBI:29108"/>
        <label>2</label>
    </ligand>
</feature>
<feature type="binding site" evidence="1">
    <location>
        <position position="417"/>
    </location>
    <ligand>
        <name>Ca(2+)</name>
        <dbReference type="ChEBI" id="CHEBI:29108"/>
        <label>2</label>
    </ligand>
</feature>
<feature type="glycosylation site" description="N-linked (GlcNAc...) asparagine" evidence="2">
    <location>
        <position position="217"/>
    </location>
</feature>
<feature type="disulfide bond" evidence="1">
    <location>
        <begin position="309"/>
        <end position="389"/>
    </location>
</feature>
<feature type="disulfide bond" evidence="1">
    <location>
        <begin position="349"/>
        <end position="373"/>
    </location>
</feature>
<feature type="disulfide bond" evidence="1">
    <location>
        <begin position="351"/>
        <end position="356"/>
    </location>
</feature>
<feature type="disulfide bond" evidence="1">
    <location>
        <begin position="405"/>
        <end position="434"/>
    </location>
</feature>
<feature type="disulfide bond" evidence="1">
    <location>
        <begin position="416"/>
        <end position="429"/>
    </location>
</feature>
<feature type="disulfide bond" evidence="1">
    <location>
        <begin position="418"/>
        <end position="424"/>
    </location>
</feature>
<feature type="disulfide bond" evidence="1">
    <location>
        <begin position="428"/>
        <end position="451"/>
    </location>
</feature>
<feature type="disulfide bond" evidence="1">
    <location>
        <begin position="442"/>
        <end position="448"/>
    </location>
</feature>
<feature type="disulfide bond" evidence="1">
    <location>
        <begin position="447"/>
        <end position="473"/>
    </location>
</feature>
<feature type="disulfide bond" evidence="1">
    <location>
        <begin position="460"/>
        <end position="480"/>
    </location>
</feature>
<feature type="disulfide bond" evidence="1">
    <location>
        <begin position="467"/>
        <end position="499"/>
    </location>
</feature>
<feature type="disulfide bond" evidence="1">
    <location>
        <begin position="492"/>
        <end position="504"/>
    </location>
</feature>
<feature type="disulfide bond" evidence="1">
    <location>
        <begin position="511"/>
        <end position="561"/>
    </location>
</feature>
<feature type="disulfide bond" evidence="1">
    <location>
        <begin position="526"/>
        <end position="572"/>
    </location>
</feature>
<feature type="disulfide bond" evidence="1">
    <location>
        <begin position="539"/>
        <end position="549"/>
    </location>
</feature>
<feature type="disulfide bond" evidence="1">
    <location>
        <begin position="556"/>
        <end position="598"/>
    </location>
</feature>
<feature type="disulfide bond" evidence="1">
    <location>
        <begin position="592"/>
        <end position="603"/>
    </location>
</feature>
<evidence type="ECO:0000250" key="1"/>
<evidence type="ECO:0000255" key="2"/>
<evidence type="ECO:0000255" key="3">
    <source>
        <dbReference type="PROSITE-ProRule" id="PRU00068"/>
    </source>
</evidence>
<evidence type="ECO:0000255" key="4">
    <source>
        <dbReference type="PROSITE-ProRule" id="PRU00276"/>
    </source>
</evidence>
<evidence type="ECO:0000305" key="5"/>
<accession>J3S830</accession>